<comment type="function">
    <text evidence="1">ATPase subunit of a proteasome-like degradation complex; this subunit has chaperone activity. The binding of ATP and its subsequent hydrolysis by HslU are essential for unfolding of protein substrates subsequently hydrolyzed by HslV. HslU recognizes the N-terminal part of its protein substrates and unfolds these before they are guided to HslV for hydrolysis.</text>
</comment>
<comment type="subunit">
    <text evidence="1">A double ring-shaped homohexamer of HslV is capped on each side by a ring-shaped HslU homohexamer. The assembly of the HslU/HslV complex is dependent on binding of ATP.</text>
</comment>
<comment type="subcellular location">
    <subcellularLocation>
        <location evidence="1">Cytoplasm</location>
    </subcellularLocation>
</comment>
<comment type="similarity">
    <text evidence="1">Belongs to the ClpX chaperone family. HslU subfamily.</text>
</comment>
<protein>
    <recommendedName>
        <fullName evidence="1">ATP-dependent protease ATPase subunit HslU</fullName>
    </recommendedName>
    <alternativeName>
        <fullName evidence="1">Unfoldase HslU</fullName>
    </alternativeName>
</protein>
<sequence>MDTNGIKLTPKDIVSKLNEYIVGQNDAKRKVAIALRNRYRRSLLKEEEKQEIAPKNILMIGPTGVGKTEIARRMAKIVGAPFIKVEATKFTEVGYVGRDVESMVRDLVDVAVRLVKDEKKSLVKDEATKKANDKLVKLLVPSLKKKAAQGNNPLENLFGGAIPNFGQNQDEEEEPPTEEIKTKRSEIKKQLEQGKLENEKVRIKVEQDPASMGMLGTNQNQQIQDMMNQLMPKKKVEREVSVETARKILADDFADELIDQETANQQALELAEQMGIIFIDEIDKVATNNQNSGQDVSRQGVQRDILPILEGSMIQTKYGTVNTEHMLFIGAGAFHVSKPSDLIPELQGRFPIRVELESLSVEDFVRILTEPKLSLVKQYEALLQTEEVTVNFSEDAIQRLAEIAYQVNQDTDNIGARRLHTILEKMLEDLSFEAPSMPNAVVDITPQYVDDKLKSISTNKDLSAFIL</sequence>
<feature type="chain" id="PRO_0000160553" description="ATP-dependent protease ATPase subunit HslU">
    <location>
        <begin position="1"/>
        <end position="467"/>
    </location>
</feature>
<feature type="region of interest" description="Disordered" evidence="2">
    <location>
        <begin position="166"/>
        <end position="185"/>
    </location>
</feature>
<feature type="binding site" evidence="1">
    <location>
        <position position="22"/>
    </location>
    <ligand>
        <name>ATP</name>
        <dbReference type="ChEBI" id="CHEBI:30616"/>
    </ligand>
</feature>
<feature type="binding site" evidence="1">
    <location>
        <begin position="64"/>
        <end position="69"/>
    </location>
    <ligand>
        <name>ATP</name>
        <dbReference type="ChEBI" id="CHEBI:30616"/>
    </ligand>
</feature>
<feature type="binding site" evidence="1">
    <location>
        <position position="280"/>
    </location>
    <ligand>
        <name>ATP</name>
        <dbReference type="ChEBI" id="CHEBI:30616"/>
    </ligand>
</feature>
<feature type="binding site" evidence="1">
    <location>
        <position position="345"/>
    </location>
    <ligand>
        <name>ATP</name>
        <dbReference type="ChEBI" id="CHEBI:30616"/>
    </ligand>
</feature>
<feature type="binding site" evidence="1">
    <location>
        <position position="417"/>
    </location>
    <ligand>
        <name>ATP</name>
        <dbReference type="ChEBI" id="CHEBI:30616"/>
    </ligand>
</feature>
<dbReference type="EMBL" id="AE015929">
    <property type="protein sequence ID" value="AAO04527.1"/>
    <property type="molecule type" value="Genomic_DNA"/>
</dbReference>
<dbReference type="RefSeq" id="NP_764485.1">
    <property type="nucleotide sequence ID" value="NC_004461.1"/>
</dbReference>
<dbReference type="RefSeq" id="WP_001829474.1">
    <property type="nucleotide sequence ID" value="NZ_WBME01000001.1"/>
</dbReference>
<dbReference type="SMR" id="Q8CPH0"/>
<dbReference type="GeneID" id="50018934"/>
<dbReference type="KEGG" id="sep:SE_0930"/>
<dbReference type="PATRIC" id="fig|176280.10.peg.905"/>
<dbReference type="eggNOG" id="COG1220">
    <property type="taxonomic scope" value="Bacteria"/>
</dbReference>
<dbReference type="HOGENOM" id="CLU_033123_0_0_9"/>
<dbReference type="OrthoDB" id="9804062at2"/>
<dbReference type="Proteomes" id="UP000001411">
    <property type="component" value="Chromosome"/>
</dbReference>
<dbReference type="GO" id="GO:0009376">
    <property type="term" value="C:HslUV protease complex"/>
    <property type="evidence" value="ECO:0007669"/>
    <property type="project" value="UniProtKB-UniRule"/>
</dbReference>
<dbReference type="GO" id="GO:0005524">
    <property type="term" value="F:ATP binding"/>
    <property type="evidence" value="ECO:0007669"/>
    <property type="project" value="UniProtKB-UniRule"/>
</dbReference>
<dbReference type="GO" id="GO:0016887">
    <property type="term" value="F:ATP hydrolysis activity"/>
    <property type="evidence" value="ECO:0007669"/>
    <property type="project" value="InterPro"/>
</dbReference>
<dbReference type="GO" id="GO:0008233">
    <property type="term" value="F:peptidase activity"/>
    <property type="evidence" value="ECO:0007669"/>
    <property type="project" value="InterPro"/>
</dbReference>
<dbReference type="GO" id="GO:0036402">
    <property type="term" value="F:proteasome-activating activity"/>
    <property type="evidence" value="ECO:0007669"/>
    <property type="project" value="UniProtKB-UniRule"/>
</dbReference>
<dbReference type="GO" id="GO:0043335">
    <property type="term" value="P:protein unfolding"/>
    <property type="evidence" value="ECO:0007669"/>
    <property type="project" value="UniProtKB-UniRule"/>
</dbReference>
<dbReference type="GO" id="GO:0051603">
    <property type="term" value="P:proteolysis involved in protein catabolic process"/>
    <property type="evidence" value="ECO:0007669"/>
    <property type="project" value="TreeGrafter"/>
</dbReference>
<dbReference type="CDD" id="cd19498">
    <property type="entry name" value="RecA-like_HslU"/>
    <property type="match status" value="1"/>
</dbReference>
<dbReference type="FunFam" id="3.40.50.300:FF:000220">
    <property type="entry name" value="ATP-dependent protease ATPase subunit HslU"/>
    <property type="match status" value="1"/>
</dbReference>
<dbReference type="Gene3D" id="1.10.8.60">
    <property type="match status" value="1"/>
</dbReference>
<dbReference type="Gene3D" id="3.40.50.300">
    <property type="entry name" value="P-loop containing nucleotide triphosphate hydrolases"/>
    <property type="match status" value="2"/>
</dbReference>
<dbReference type="HAMAP" id="MF_00249">
    <property type="entry name" value="HslU"/>
    <property type="match status" value="1"/>
</dbReference>
<dbReference type="InterPro" id="IPR003593">
    <property type="entry name" value="AAA+_ATPase"/>
</dbReference>
<dbReference type="InterPro" id="IPR050052">
    <property type="entry name" value="ATP-dep_Clp_protease_ClpX"/>
</dbReference>
<dbReference type="InterPro" id="IPR003959">
    <property type="entry name" value="ATPase_AAA_core"/>
</dbReference>
<dbReference type="InterPro" id="IPR019489">
    <property type="entry name" value="Clp_ATPase_C"/>
</dbReference>
<dbReference type="InterPro" id="IPR004491">
    <property type="entry name" value="HslU"/>
</dbReference>
<dbReference type="InterPro" id="IPR027417">
    <property type="entry name" value="P-loop_NTPase"/>
</dbReference>
<dbReference type="NCBIfam" id="TIGR00390">
    <property type="entry name" value="hslU"/>
    <property type="match status" value="1"/>
</dbReference>
<dbReference type="NCBIfam" id="NF003544">
    <property type="entry name" value="PRK05201.1"/>
    <property type="match status" value="1"/>
</dbReference>
<dbReference type="PANTHER" id="PTHR48102">
    <property type="entry name" value="ATP-DEPENDENT CLP PROTEASE ATP-BINDING SUBUNIT CLPX-LIKE, MITOCHONDRIAL-RELATED"/>
    <property type="match status" value="1"/>
</dbReference>
<dbReference type="PANTHER" id="PTHR48102:SF3">
    <property type="entry name" value="ATP-DEPENDENT PROTEASE ATPASE SUBUNIT HSLU"/>
    <property type="match status" value="1"/>
</dbReference>
<dbReference type="Pfam" id="PF00004">
    <property type="entry name" value="AAA"/>
    <property type="match status" value="1"/>
</dbReference>
<dbReference type="Pfam" id="PF07724">
    <property type="entry name" value="AAA_2"/>
    <property type="match status" value="1"/>
</dbReference>
<dbReference type="Pfam" id="PF10431">
    <property type="entry name" value="ClpB_D2-small"/>
    <property type="match status" value="1"/>
</dbReference>
<dbReference type="SMART" id="SM00382">
    <property type="entry name" value="AAA"/>
    <property type="match status" value="1"/>
</dbReference>
<dbReference type="SMART" id="SM01086">
    <property type="entry name" value="ClpB_D2-small"/>
    <property type="match status" value="1"/>
</dbReference>
<dbReference type="SUPFAM" id="SSF52540">
    <property type="entry name" value="P-loop containing nucleoside triphosphate hydrolases"/>
    <property type="match status" value="1"/>
</dbReference>
<organism>
    <name type="scientific">Staphylococcus epidermidis (strain ATCC 12228 / FDA PCI 1200)</name>
    <dbReference type="NCBI Taxonomy" id="176280"/>
    <lineage>
        <taxon>Bacteria</taxon>
        <taxon>Bacillati</taxon>
        <taxon>Bacillota</taxon>
        <taxon>Bacilli</taxon>
        <taxon>Bacillales</taxon>
        <taxon>Staphylococcaceae</taxon>
        <taxon>Staphylococcus</taxon>
    </lineage>
</organism>
<reference key="1">
    <citation type="journal article" date="2003" name="Mol. Microbiol.">
        <title>Genome-based analysis of virulence genes in a non-biofilm-forming Staphylococcus epidermidis strain (ATCC 12228).</title>
        <authorList>
            <person name="Zhang Y.-Q."/>
            <person name="Ren S.-X."/>
            <person name="Li H.-L."/>
            <person name="Wang Y.-X."/>
            <person name="Fu G."/>
            <person name="Yang J."/>
            <person name="Qin Z.-Q."/>
            <person name="Miao Y.-G."/>
            <person name="Wang W.-Y."/>
            <person name="Chen R.-S."/>
            <person name="Shen Y."/>
            <person name="Chen Z."/>
            <person name="Yuan Z.-H."/>
            <person name="Zhao G.-P."/>
            <person name="Qu D."/>
            <person name="Danchin A."/>
            <person name="Wen Y.-M."/>
        </authorList>
    </citation>
    <scope>NUCLEOTIDE SEQUENCE [LARGE SCALE GENOMIC DNA]</scope>
    <source>
        <strain>ATCC 12228 / FDA PCI 1200</strain>
    </source>
</reference>
<evidence type="ECO:0000255" key="1">
    <source>
        <dbReference type="HAMAP-Rule" id="MF_00249"/>
    </source>
</evidence>
<evidence type="ECO:0000256" key="2">
    <source>
        <dbReference type="SAM" id="MobiDB-lite"/>
    </source>
</evidence>
<accession>Q8CPH0</accession>
<keyword id="KW-0067">ATP-binding</keyword>
<keyword id="KW-0143">Chaperone</keyword>
<keyword id="KW-0963">Cytoplasm</keyword>
<keyword id="KW-0547">Nucleotide-binding</keyword>
<gene>
    <name evidence="1" type="primary">hslU</name>
    <name type="ordered locus">SE_0930</name>
</gene>
<proteinExistence type="inferred from homology"/>
<name>HSLU_STAES</name>